<organism>
    <name type="scientific">Sodalis glossinidius (strain morsitans)</name>
    <dbReference type="NCBI Taxonomy" id="343509"/>
    <lineage>
        <taxon>Bacteria</taxon>
        <taxon>Pseudomonadati</taxon>
        <taxon>Pseudomonadota</taxon>
        <taxon>Gammaproteobacteria</taxon>
        <taxon>Enterobacterales</taxon>
        <taxon>Bruguierivoracaceae</taxon>
        <taxon>Sodalis</taxon>
    </lineage>
</organism>
<keyword id="KW-0170">Cobalt</keyword>
<keyword id="KW-0963">Cytoplasm</keyword>
<keyword id="KW-0460">Magnesium</keyword>
<keyword id="KW-0479">Metal-binding</keyword>
<keyword id="KW-0520">NAD</keyword>
<keyword id="KW-0521">NADP</keyword>
<keyword id="KW-0560">Oxidoreductase</keyword>
<keyword id="KW-0664">Pyridoxine biosynthesis</keyword>
<keyword id="KW-0862">Zinc</keyword>
<feature type="chain" id="PRO_1000061034" description="4-hydroxythreonine-4-phosphate dehydrogenase">
    <location>
        <begin position="1"/>
        <end position="330"/>
    </location>
</feature>
<feature type="binding site" evidence="1">
    <location>
        <position position="136"/>
    </location>
    <ligand>
        <name>substrate</name>
    </ligand>
</feature>
<feature type="binding site" evidence="1">
    <location>
        <position position="137"/>
    </location>
    <ligand>
        <name>substrate</name>
    </ligand>
</feature>
<feature type="binding site" evidence="1">
    <location>
        <position position="166"/>
    </location>
    <ligand>
        <name>a divalent metal cation</name>
        <dbReference type="ChEBI" id="CHEBI:60240"/>
        <note>ligand shared between dimeric partners</note>
    </ligand>
</feature>
<feature type="binding site" evidence="1">
    <location>
        <position position="211"/>
    </location>
    <ligand>
        <name>a divalent metal cation</name>
        <dbReference type="ChEBI" id="CHEBI:60240"/>
        <note>ligand shared between dimeric partners</note>
    </ligand>
</feature>
<feature type="binding site" evidence="1">
    <location>
        <position position="266"/>
    </location>
    <ligand>
        <name>a divalent metal cation</name>
        <dbReference type="ChEBI" id="CHEBI:60240"/>
        <note>ligand shared between dimeric partners</note>
    </ligand>
</feature>
<feature type="binding site" evidence="1">
    <location>
        <position position="274"/>
    </location>
    <ligand>
        <name>substrate</name>
    </ligand>
</feature>
<feature type="binding site" evidence="1">
    <location>
        <position position="283"/>
    </location>
    <ligand>
        <name>substrate</name>
    </ligand>
</feature>
<feature type="binding site" evidence="1">
    <location>
        <position position="292"/>
    </location>
    <ligand>
        <name>substrate</name>
    </ligand>
</feature>
<comment type="function">
    <text evidence="1">Catalyzes the NAD(P)-dependent oxidation of 4-(phosphooxy)-L-threonine (HTP) into 2-amino-3-oxo-4-(phosphooxy)butyric acid which spontaneously decarboxylates to form 3-amino-2-oxopropyl phosphate (AHAP).</text>
</comment>
<comment type="catalytic activity">
    <reaction evidence="1">
        <text>4-(phosphooxy)-L-threonine + NAD(+) = 3-amino-2-oxopropyl phosphate + CO2 + NADH</text>
        <dbReference type="Rhea" id="RHEA:32275"/>
        <dbReference type="ChEBI" id="CHEBI:16526"/>
        <dbReference type="ChEBI" id="CHEBI:57279"/>
        <dbReference type="ChEBI" id="CHEBI:57540"/>
        <dbReference type="ChEBI" id="CHEBI:57945"/>
        <dbReference type="ChEBI" id="CHEBI:58452"/>
        <dbReference type="EC" id="1.1.1.262"/>
    </reaction>
</comment>
<comment type="cofactor">
    <cofactor evidence="1">
        <name>Zn(2+)</name>
        <dbReference type="ChEBI" id="CHEBI:29105"/>
    </cofactor>
    <cofactor evidence="1">
        <name>Mg(2+)</name>
        <dbReference type="ChEBI" id="CHEBI:18420"/>
    </cofactor>
    <cofactor evidence="1">
        <name>Co(2+)</name>
        <dbReference type="ChEBI" id="CHEBI:48828"/>
    </cofactor>
    <text evidence="1">Binds 1 divalent metal cation per subunit. Can use ions such as Zn(2+), Mg(2+) or Co(2+).</text>
</comment>
<comment type="pathway">
    <text evidence="1">Cofactor biosynthesis; pyridoxine 5'-phosphate biosynthesis; pyridoxine 5'-phosphate from D-erythrose 4-phosphate: step 4/5.</text>
</comment>
<comment type="subunit">
    <text evidence="1">Homodimer.</text>
</comment>
<comment type="subcellular location">
    <subcellularLocation>
        <location evidence="1">Cytoplasm</location>
    </subcellularLocation>
</comment>
<comment type="miscellaneous">
    <text evidence="1">The active site is located at the dimer interface.</text>
</comment>
<comment type="similarity">
    <text evidence="1">Belongs to the PdxA family.</text>
</comment>
<proteinExistence type="inferred from homology"/>
<dbReference type="EC" id="1.1.1.262" evidence="1"/>
<dbReference type="EMBL" id="AP008232">
    <property type="protein sequence ID" value="BAE73700.1"/>
    <property type="molecule type" value="Genomic_DNA"/>
</dbReference>
<dbReference type="RefSeq" id="WP_011410288.1">
    <property type="nucleotide sequence ID" value="NC_007712.1"/>
</dbReference>
<dbReference type="SMR" id="Q2NVX5"/>
<dbReference type="STRING" id="343509.SG0425"/>
<dbReference type="KEGG" id="sgl:SG0425"/>
<dbReference type="eggNOG" id="COG1995">
    <property type="taxonomic scope" value="Bacteria"/>
</dbReference>
<dbReference type="HOGENOM" id="CLU_040168_1_0_6"/>
<dbReference type="OrthoDB" id="9801783at2"/>
<dbReference type="BioCyc" id="SGLO343509:SGP1_RS03880-MONOMER"/>
<dbReference type="UniPathway" id="UPA00244">
    <property type="reaction ID" value="UER00312"/>
</dbReference>
<dbReference type="Proteomes" id="UP000001932">
    <property type="component" value="Chromosome"/>
</dbReference>
<dbReference type="GO" id="GO:0005737">
    <property type="term" value="C:cytoplasm"/>
    <property type="evidence" value="ECO:0007669"/>
    <property type="project" value="UniProtKB-SubCell"/>
</dbReference>
<dbReference type="GO" id="GO:0050570">
    <property type="term" value="F:4-hydroxythreonine-4-phosphate dehydrogenase activity"/>
    <property type="evidence" value="ECO:0007669"/>
    <property type="project" value="UniProtKB-UniRule"/>
</dbReference>
<dbReference type="GO" id="GO:0050897">
    <property type="term" value="F:cobalt ion binding"/>
    <property type="evidence" value="ECO:0007669"/>
    <property type="project" value="UniProtKB-UniRule"/>
</dbReference>
<dbReference type="GO" id="GO:0000287">
    <property type="term" value="F:magnesium ion binding"/>
    <property type="evidence" value="ECO:0007669"/>
    <property type="project" value="UniProtKB-UniRule"/>
</dbReference>
<dbReference type="GO" id="GO:0051287">
    <property type="term" value="F:NAD binding"/>
    <property type="evidence" value="ECO:0007669"/>
    <property type="project" value="InterPro"/>
</dbReference>
<dbReference type="GO" id="GO:0008270">
    <property type="term" value="F:zinc ion binding"/>
    <property type="evidence" value="ECO:0007669"/>
    <property type="project" value="UniProtKB-UniRule"/>
</dbReference>
<dbReference type="GO" id="GO:0042823">
    <property type="term" value="P:pyridoxal phosphate biosynthetic process"/>
    <property type="evidence" value="ECO:0007669"/>
    <property type="project" value="UniProtKB-UniRule"/>
</dbReference>
<dbReference type="GO" id="GO:0008615">
    <property type="term" value="P:pyridoxine biosynthetic process"/>
    <property type="evidence" value="ECO:0007669"/>
    <property type="project" value="UniProtKB-UniRule"/>
</dbReference>
<dbReference type="Gene3D" id="3.40.718.10">
    <property type="entry name" value="Isopropylmalate Dehydrogenase"/>
    <property type="match status" value="1"/>
</dbReference>
<dbReference type="HAMAP" id="MF_00536">
    <property type="entry name" value="PdxA"/>
    <property type="match status" value="1"/>
</dbReference>
<dbReference type="InterPro" id="IPR037510">
    <property type="entry name" value="PdxA"/>
</dbReference>
<dbReference type="InterPro" id="IPR005255">
    <property type="entry name" value="PdxA_fam"/>
</dbReference>
<dbReference type="NCBIfam" id="TIGR00557">
    <property type="entry name" value="pdxA"/>
    <property type="match status" value="1"/>
</dbReference>
<dbReference type="PANTHER" id="PTHR30004">
    <property type="entry name" value="4-HYDROXYTHREONINE-4-PHOSPHATE DEHYDROGENASE"/>
    <property type="match status" value="1"/>
</dbReference>
<dbReference type="PANTHER" id="PTHR30004:SF5">
    <property type="entry name" value="4-HYDROXYTHREONINE-4-PHOSPHATE DEHYDROGENASE"/>
    <property type="match status" value="1"/>
</dbReference>
<dbReference type="Pfam" id="PF04166">
    <property type="entry name" value="PdxA"/>
    <property type="match status" value="1"/>
</dbReference>
<dbReference type="SUPFAM" id="SSF53659">
    <property type="entry name" value="Isocitrate/Isopropylmalate dehydrogenase-like"/>
    <property type="match status" value="1"/>
</dbReference>
<sequence>MGSNQRIVITPGEPAGIGPDLVAALAQQAWPVELVICADPALLTARAQQLGLPLRLHSYRPEQPATPRPAGELTVLAIDTPAPVAAGELNVANSHYVVETLARACDSCLNGEFAALLTGPVHKGVINDGGLPFSGHTEYFAQRSGRERVVMMLATESLRVALATTHLPLLAVPGAVTRQSLDEVITILVHDLQQQFGIAQPCIYVCGLNPHAGEGGHMGREEIEVITPALDTLRAKGYNLVGPLPADTLFQPKYLQQADAVLAMYHDQGLPVLKYQGFGRAVNITLGLPFIRTSVDHGTALELAGSGQAEAGSIKTALNIAIDMIKHRNE</sequence>
<gene>
    <name evidence="1" type="primary">pdxA</name>
    <name type="ordered locus">SG0425</name>
</gene>
<accession>Q2NVX5</accession>
<protein>
    <recommendedName>
        <fullName evidence="1">4-hydroxythreonine-4-phosphate dehydrogenase</fullName>
        <ecNumber evidence="1">1.1.1.262</ecNumber>
    </recommendedName>
    <alternativeName>
        <fullName evidence="1">4-(phosphohydroxy)-L-threonine dehydrogenase</fullName>
    </alternativeName>
</protein>
<reference key="1">
    <citation type="journal article" date="2006" name="Genome Res.">
        <title>Massive genome erosion and functional adaptations provide insights into the symbiotic lifestyle of Sodalis glossinidius in the tsetse host.</title>
        <authorList>
            <person name="Toh H."/>
            <person name="Weiss B.L."/>
            <person name="Perkin S.A.H."/>
            <person name="Yamashita A."/>
            <person name="Oshima K."/>
            <person name="Hattori M."/>
            <person name="Aksoy S."/>
        </authorList>
    </citation>
    <scope>NUCLEOTIDE SEQUENCE [LARGE SCALE GENOMIC DNA]</scope>
    <source>
        <strain>morsitans</strain>
    </source>
</reference>
<evidence type="ECO:0000255" key="1">
    <source>
        <dbReference type="HAMAP-Rule" id="MF_00536"/>
    </source>
</evidence>
<name>PDXA_SODGM</name>